<dbReference type="EMBL" id="X58429">
    <property type="protein sequence ID" value="CAA41334.1"/>
    <property type="molecule type" value="Genomic_DNA"/>
</dbReference>
<dbReference type="PIR" id="S19231">
    <property type="entry name" value="F1FNIT"/>
</dbReference>
<dbReference type="SMR" id="P28251"/>
<dbReference type="GO" id="GO:0009535">
    <property type="term" value="C:chloroplast thylakoid membrane"/>
    <property type="evidence" value="ECO:0007669"/>
    <property type="project" value="UniProtKB-SubCell"/>
</dbReference>
<dbReference type="GO" id="GO:0009522">
    <property type="term" value="C:photosystem I"/>
    <property type="evidence" value="ECO:0007669"/>
    <property type="project" value="UniProtKB-KW"/>
</dbReference>
<dbReference type="GO" id="GO:0015979">
    <property type="term" value="P:photosynthesis"/>
    <property type="evidence" value="ECO:0007669"/>
    <property type="project" value="UniProtKB-UniRule"/>
</dbReference>
<dbReference type="HAMAP" id="MF_00431">
    <property type="entry name" value="PSI_PsaI"/>
    <property type="match status" value="1"/>
</dbReference>
<dbReference type="InterPro" id="IPR001302">
    <property type="entry name" value="PSI_PsaI"/>
</dbReference>
<dbReference type="InterPro" id="IPR036357">
    <property type="entry name" value="PSI_PsaI_sf"/>
</dbReference>
<dbReference type="NCBIfam" id="NF008830">
    <property type="entry name" value="PRK11877.1"/>
    <property type="match status" value="1"/>
</dbReference>
<dbReference type="NCBIfam" id="TIGR03052">
    <property type="entry name" value="PS_I_psaI"/>
    <property type="match status" value="1"/>
</dbReference>
<dbReference type="PANTHER" id="PTHR35775">
    <property type="match status" value="1"/>
</dbReference>
<dbReference type="PANTHER" id="PTHR35775:SF2">
    <property type="entry name" value="PHOTOSYSTEM I REACTION CENTER SUBUNIT VIII"/>
    <property type="match status" value="1"/>
</dbReference>
<dbReference type="Pfam" id="PF00796">
    <property type="entry name" value="PSI_8"/>
    <property type="match status" value="1"/>
</dbReference>
<dbReference type="SUPFAM" id="SSF81540">
    <property type="entry name" value="Subunit VIII of photosystem I reaction centre, PsaI"/>
    <property type="match status" value="1"/>
</dbReference>
<reference key="1">
    <citation type="journal article" date="1992" name="Plant Mol. Biol.">
        <title>Nucleotide sequence of atpB, rbcL, trnR, dedB and psaI chloroplast genes from a fern Angiopteris lygodiifolia: a possible emergence of Spermatophyta lineage before the separation of Bryophyta and Pteridophyta.</title>
        <authorList>
            <person name="Yoshinaga K."/>
            <person name="Kubota Y."/>
            <person name="Ishii T."/>
            <person name="Wada K."/>
        </authorList>
    </citation>
    <scope>NUCLEOTIDE SEQUENCE [GENOMIC DNA]</scope>
    <source>
        <strain>Rosenstock</strain>
    </source>
</reference>
<organism>
    <name type="scientific">Angiopteris lygodiifolia</name>
    <name type="common">Turnip fern</name>
    <dbReference type="NCBI Taxonomy" id="3267"/>
    <lineage>
        <taxon>Eukaryota</taxon>
        <taxon>Viridiplantae</taxon>
        <taxon>Streptophyta</taxon>
        <taxon>Embryophyta</taxon>
        <taxon>Tracheophyta</taxon>
        <taxon>Polypodiopsida</taxon>
        <taxon>Marattiidae</taxon>
        <taxon>Marattiales</taxon>
        <taxon>Marattiaceae</taxon>
        <taxon>Angiopteris</taxon>
    </lineage>
</organism>
<proteinExistence type="inferred from homology"/>
<name>PSAI_ANGLY</name>
<geneLocation type="chloroplast"/>
<comment type="function">
    <text evidence="1">May help in the organization of the PsaL subunit.</text>
</comment>
<comment type="subcellular location">
    <subcellularLocation>
        <location evidence="1">Plastid</location>
        <location evidence="1">Chloroplast thylakoid membrane</location>
        <topology evidence="1">Single-pass membrane protein</topology>
    </subcellularLocation>
</comment>
<comment type="similarity">
    <text evidence="3">Belongs to the PsaI family.</text>
</comment>
<evidence type="ECO:0000250" key="1"/>
<evidence type="ECO:0000255" key="2"/>
<evidence type="ECO:0000305" key="3"/>
<protein>
    <recommendedName>
        <fullName>Photosystem I reaction center subunit VIII</fullName>
        <shortName>PSI-I</shortName>
    </recommendedName>
</protein>
<gene>
    <name type="primary">psaI</name>
</gene>
<feature type="chain" id="PRO_0000194641" description="Photosystem I reaction center subunit VIII">
    <location>
        <begin position="1"/>
        <end position="36"/>
    </location>
</feature>
<feature type="transmembrane region" description="Helical" evidence="2">
    <location>
        <begin position="10"/>
        <end position="30"/>
    </location>
</feature>
<sequence>MTASYLPSIFVPLVGLVFPAITMASLSIYIEQDEIV</sequence>
<accession>P28251</accession>
<keyword id="KW-0150">Chloroplast</keyword>
<keyword id="KW-0472">Membrane</keyword>
<keyword id="KW-0602">Photosynthesis</keyword>
<keyword id="KW-0603">Photosystem I</keyword>
<keyword id="KW-0934">Plastid</keyword>
<keyword id="KW-0793">Thylakoid</keyword>
<keyword id="KW-0812">Transmembrane</keyword>
<keyword id="KW-1133">Transmembrane helix</keyword>